<name>MYCN_MARMO</name>
<feature type="chain" id="PRO_0000127324" description="N-myc proto-oncogene protein">
    <location>
        <begin position="1"/>
        <end position="460"/>
    </location>
</feature>
<feature type="domain" description="bHLH" evidence="2">
    <location>
        <begin position="377"/>
        <end position="429"/>
    </location>
</feature>
<feature type="region of interest" description="Interaction with AURKA" evidence="1">
    <location>
        <begin position="19"/>
        <end position="47"/>
    </location>
</feature>
<feature type="region of interest" description="Interaction with AURKA and FBXW7" evidence="1">
    <location>
        <begin position="61"/>
        <end position="90"/>
    </location>
</feature>
<feature type="region of interest" description="Disordered" evidence="3">
    <location>
        <begin position="131"/>
        <end position="169"/>
    </location>
</feature>
<feature type="region of interest" description="Disordered" evidence="3">
    <location>
        <begin position="221"/>
        <end position="288"/>
    </location>
</feature>
<feature type="region of interest" description="Disordered" evidence="3">
    <location>
        <begin position="330"/>
        <end position="388"/>
    </location>
</feature>
<feature type="region of interest" description="Leucine-zipper">
    <location>
        <begin position="429"/>
        <end position="450"/>
    </location>
</feature>
<feature type="short sequence motif" description="9aaTAD" evidence="1">
    <location>
        <begin position="76"/>
        <end position="85"/>
    </location>
</feature>
<feature type="compositionally biased region" description="Low complexity" evidence="3">
    <location>
        <begin position="138"/>
        <end position="158"/>
    </location>
</feature>
<feature type="compositionally biased region" description="Gly residues" evidence="3">
    <location>
        <begin position="159"/>
        <end position="169"/>
    </location>
</feature>
<feature type="compositionally biased region" description="Low complexity" evidence="3">
    <location>
        <begin position="221"/>
        <end position="233"/>
    </location>
</feature>
<feature type="compositionally biased region" description="Acidic residues" evidence="3">
    <location>
        <begin position="255"/>
        <end position="274"/>
    </location>
</feature>
<feature type="modified residue" description="Phosphoserine; by CK2" evidence="1">
    <location>
        <position position="257"/>
    </location>
</feature>
<feature type="modified residue" description="Phosphoserine; by CK2" evidence="1">
    <location>
        <position position="259"/>
    </location>
</feature>
<accession>Q61976</accession>
<dbReference type="EMBL" id="X53673">
    <property type="protein sequence ID" value="CAA37712.1"/>
    <property type="molecule type" value="Genomic_DNA"/>
</dbReference>
<dbReference type="EMBL" id="X53674">
    <property type="protein sequence ID" value="CAA37712.1"/>
    <property type="status" value="JOINED"/>
    <property type="molecule type" value="Genomic_DNA"/>
</dbReference>
<dbReference type="PIR" id="S11558">
    <property type="entry name" value="S11558"/>
</dbReference>
<dbReference type="SMR" id="Q61976"/>
<dbReference type="GO" id="GO:0005634">
    <property type="term" value="C:nucleus"/>
    <property type="evidence" value="ECO:0007669"/>
    <property type="project" value="UniProtKB-SubCell"/>
</dbReference>
<dbReference type="GO" id="GO:0003677">
    <property type="term" value="F:DNA binding"/>
    <property type="evidence" value="ECO:0007669"/>
    <property type="project" value="UniProtKB-KW"/>
</dbReference>
<dbReference type="GO" id="GO:0003700">
    <property type="term" value="F:DNA-binding transcription factor activity"/>
    <property type="evidence" value="ECO:0007669"/>
    <property type="project" value="InterPro"/>
</dbReference>
<dbReference type="GO" id="GO:0046983">
    <property type="term" value="F:protein dimerization activity"/>
    <property type="evidence" value="ECO:0007669"/>
    <property type="project" value="InterPro"/>
</dbReference>
<dbReference type="CDD" id="cd11456">
    <property type="entry name" value="bHLHzip_N-Myc_like"/>
    <property type="match status" value="1"/>
</dbReference>
<dbReference type="FunFam" id="4.10.280.10:FF:000019">
    <property type="entry name" value="Myc proto-oncogene protein"/>
    <property type="match status" value="1"/>
</dbReference>
<dbReference type="Gene3D" id="4.10.280.10">
    <property type="entry name" value="Helix-loop-helix DNA-binding domain"/>
    <property type="match status" value="1"/>
</dbReference>
<dbReference type="InterPro" id="IPR011598">
    <property type="entry name" value="bHLH_dom"/>
</dbReference>
<dbReference type="InterPro" id="IPR036638">
    <property type="entry name" value="HLH_DNA-bd_sf"/>
</dbReference>
<dbReference type="InterPro" id="IPR050433">
    <property type="entry name" value="Myc_transcription_factors"/>
</dbReference>
<dbReference type="InterPro" id="IPR002418">
    <property type="entry name" value="Tscrpt_reg_Myc"/>
</dbReference>
<dbReference type="InterPro" id="IPR012682">
    <property type="entry name" value="Tscrpt_reg_Myc_N"/>
</dbReference>
<dbReference type="PANTHER" id="PTHR45851">
    <property type="entry name" value="MYC PROTO-ONCOGENE"/>
    <property type="match status" value="1"/>
</dbReference>
<dbReference type="Pfam" id="PF00010">
    <property type="entry name" value="HLH"/>
    <property type="match status" value="1"/>
</dbReference>
<dbReference type="Pfam" id="PF01056">
    <property type="entry name" value="Myc_N"/>
    <property type="match status" value="1"/>
</dbReference>
<dbReference type="PIRSF" id="PIRSF001705">
    <property type="entry name" value="Myc_protein"/>
    <property type="match status" value="1"/>
</dbReference>
<dbReference type="PRINTS" id="PR00044">
    <property type="entry name" value="LEUZIPPRMYC"/>
</dbReference>
<dbReference type="SMART" id="SM00353">
    <property type="entry name" value="HLH"/>
    <property type="match status" value="1"/>
</dbReference>
<dbReference type="SUPFAM" id="SSF47459">
    <property type="entry name" value="HLH, helix-loop-helix DNA-binding domain"/>
    <property type="match status" value="1"/>
</dbReference>
<dbReference type="PROSITE" id="PS50888">
    <property type="entry name" value="BHLH"/>
    <property type="match status" value="1"/>
</dbReference>
<keyword id="KW-0238">DNA-binding</keyword>
<keyword id="KW-0539">Nucleus</keyword>
<keyword id="KW-0597">Phosphoprotein</keyword>
<keyword id="KW-0656">Proto-oncogene</keyword>
<evidence type="ECO:0000250" key="1">
    <source>
        <dbReference type="UniProtKB" id="P04198"/>
    </source>
</evidence>
<evidence type="ECO:0000255" key="2">
    <source>
        <dbReference type="PROSITE-ProRule" id="PRU00981"/>
    </source>
</evidence>
<evidence type="ECO:0000256" key="3">
    <source>
        <dbReference type="SAM" id="MobiDB-lite"/>
    </source>
</evidence>
<proteinExistence type="inferred from homology"/>
<sequence length="460" mass="49192">MPSCTASTMPGMICKNPDLEFDSLQPCFYPDEDDFYFGGPDSTPPGEDIWKKFELLPTPPLSPSRAFSEQSPEPSDWATEMLLPEADLWGNPAEEDAFGLGGLGGLTPNPVILQDCMWSGFSAREKLERAVSEKLQHGRGPPAAGPATPGAGAANPAGRGHGGTAGAGRAGAALPAELAHPAAECVDPAVVFPFPVNKRDPAPVPVAPAGSPAVGAAVAGAAAPASAAVAAPPRLGGRPANGGDHKALSTSGEDTLSDSDDEDDEEEDEEEEIDVVTVEKRRSSSNSKAVTTFTITVRPKNAALGLGRAQSSELILKRCVPIHQQHNYAAPSPYVESEDAPPQKKIKSEVSPRPLKSVIPPKAKSLSPRNSDSEDSERRRNHNILERQRRNDLRSSFLTLRDHVPELVKNEKAAKVVILKKATEYVHSLQAEEHQLLLEKEKLQARQQQLLKKIELARTC</sequence>
<gene>
    <name type="primary">MYCN</name>
    <name type="synonym">NMYC</name>
    <name type="synonym">NMYC1</name>
</gene>
<comment type="function">
    <text evidence="1">Positively regulates the transcription of MYCNOS in neuroblastoma cells.</text>
</comment>
<comment type="subunit">
    <text evidence="1">Efficient DNA binding requires dimerization with another bHLH protein. Binds DNA as a heterodimer with MAX. Interacts with KDM5A, KDM5B and HUWE1. Interacts with MYCNOS. Interacts with AURKA; interaction is phospho-independent and triggers AURKA activation; AURKA competes with FBXW7 for binding to unphosphorylated MYCN but not for binding to unphosphorylated MYCN. Interacts with FBXW7; FBXW7 competes with AURKA for binding to unphosphorylated MYCN but not for binding to phosphorylated MYCN.</text>
</comment>
<comment type="subcellular location">
    <subcellularLocation>
        <location>Nucleus</location>
    </subcellularLocation>
</comment>
<comment type="domain">
    <text evidence="1">The 9aaTAD motif is a transactivation domain present in a large number of yeast and animal transcription factors.</text>
</comment>
<comment type="PTM">
    <text evidence="1">Phosphorylated by GSK3-beta which may promote its degradation. Phosphorylated by AURKA.</text>
</comment>
<reference key="1">
    <citation type="journal article" date="1990" name="Nucleic Acids Res.">
        <title>Nucleotide sequence of the woodchuck N-myc gene (WN-myc1).</title>
        <authorList>
            <person name="Fourel G."/>
            <person name="Tiollais P."/>
            <person name="Buendia M.-A."/>
        </authorList>
    </citation>
    <scope>NUCLEOTIDE SEQUENCE [GENOMIC DNA]</scope>
    <source>
        <tissue>Liver</tissue>
    </source>
</reference>
<organism>
    <name type="scientific">Marmota monax</name>
    <name type="common">Woodchuck</name>
    <dbReference type="NCBI Taxonomy" id="9995"/>
    <lineage>
        <taxon>Eukaryota</taxon>
        <taxon>Metazoa</taxon>
        <taxon>Chordata</taxon>
        <taxon>Craniata</taxon>
        <taxon>Vertebrata</taxon>
        <taxon>Euteleostomi</taxon>
        <taxon>Mammalia</taxon>
        <taxon>Eutheria</taxon>
        <taxon>Euarchontoglires</taxon>
        <taxon>Glires</taxon>
        <taxon>Rodentia</taxon>
        <taxon>Sciuromorpha</taxon>
        <taxon>Sciuridae</taxon>
        <taxon>Xerinae</taxon>
        <taxon>Marmotini</taxon>
        <taxon>Marmota</taxon>
    </lineage>
</organism>
<protein>
    <recommendedName>
        <fullName>N-myc proto-oncogene protein</fullName>
    </recommendedName>
    <alternativeName>
        <fullName>N-myc1</fullName>
    </alternativeName>
</protein>